<evidence type="ECO:0000250" key="1"/>
<evidence type="ECO:0000250" key="2">
    <source>
        <dbReference type="UniProtKB" id="Q9P086"/>
    </source>
</evidence>
<evidence type="ECO:0000269" key="3">
    <source>
    </source>
</evidence>
<evidence type="ECO:0000305" key="4"/>
<sequence>MATYSLANERLRALEDIEREIGAILQNAGTAILELSKEKTNERLLDRQAAAFTTSVQHVEAELSAQIRYLTQVATGQPHEGSSYSSRKDCQMALKRVDYARLKISDVARTCEQMLEN</sequence>
<protein>
    <recommendedName>
        <fullName>Mediator of RNA polymerase II transcription subunit 11</fullName>
    </recommendedName>
    <alternativeName>
        <fullName>Mediator complex subunit 11</fullName>
    </alternativeName>
</protein>
<accession>Q9D8C6</accession>
<accession>Q3V4D0</accession>
<feature type="initiator methionine" description="Removed" evidence="2">
    <location>
        <position position="1"/>
    </location>
</feature>
<feature type="chain" id="PRO_0000304309" description="Mediator of RNA polymerase II transcription subunit 11">
    <location>
        <begin position="2"/>
        <end position="117"/>
    </location>
</feature>
<feature type="modified residue" description="N-acetylalanine" evidence="2">
    <location>
        <position position="2"/>
    </location>
</feature>
<feature type="sequence conflict" description="In Ref. 1; BAE43156." evidence="4" ref="1">
    <original>A</original>
    <variation>V</variation>
    <location>
        <position position="108"/>
    </location>
</feature>
<name>MED11_MOUSE</name>
<dbReference type="EMBL" id="AK003984">
    <property type="protein sequence ID" value="BAE43156.1"/>
    <property type="molecule type" value="mRNA"/>
</dbReference>
<dbReference type="EMBL" id="AK008153">
    <property type="protein sequence ID" value="BAB25497.1"/>
    <property type="molecule type" value="mRNA"/>
</dbReference>
<dbReference type="EMBL" id="AL596096">
    <property type="status" value="NOT_ANNOTATED_CDS"/>
    <property type="molecule type" value="Genomic_DNA"/>
</dbReference>
<dbReference type="EMBL" id="CR936841">
    <property type="protein sequence ID" value="CAM28187.1"/>
    <property type="molecule type" value="Genomic_DNA"/>
</dbReference>
<dbReference type="EMBL" id="BC025057">
    <property type="protein sequence ID" value="AAH25057.1"/>
    <property type="molecule type" value="mRNA"/>
</dbReference>
<dbReference type="CCDS" id="CCDS24947.1"/>
<dbReference type="RefSeq" id="NP_079673.2">
    <property type="nucleotide sequence ID" value="NM_025397.2"/>
</dbReference>
<dbReference type="PDB" id="6W1S">
    <property type="method" value="EM"/>
    <property type="resolution" value="4.02 A"/>
    <property type="chains" value="H=8-115"/>
</dbReference>
<dbReference type="PDB" id="8T1I">
    <property type="method" value="EM"/>
    <property type="resolution" value="4.68 A"/>
    <property type="chains" value="H=1-117"/>
</dbReference>
<dbReference type="PDB" id="8T1L">
    <property type="method" value="EM"/>
    <property type="resolution" value="4.83 A"/>
    <property type="chains" value="H=1-117"/>
</dbReference>
<dbReference type="PDBsum" id="6W1S"/>
<dbReference type="PDBsum" id="8T1I"/>
<dbReference type="PDBsum" id="8T1L"/>
<dbReference type="EMDB" id="EMD-21514"/>
<dbReference type="EMDB" id="EMD-40968"/>
<dbReference type="EMDB" id="EMD-40971"/>
<dbReference type="SMR" id="Q9D8C6"/>
<dbReference type="ComplexPortal" id="CPX-3264">
    <property type="entry name" value="Core mediator complex"/>
</dbReference>
<dbReference type="FunCoup" id="Q9D8C6">
    <property type="interactions" value="1362"/>
</dbReference>
<dbReference type="IntAct" id="Q9D8C6">
    <property type="interactions" value="10"/>
</dbReference>
<dbReference type="STRING" id="10090.ENSMUSP00000019067"/>
<dbReference type="PhosphoSitePlus" id="Q9D8C6"/>
<dbReference type="PaxDb" id="10090-ENSMUSP00000019067"/>
<dbReference type="PeptideAtlas" id="Q9D8C6"/>
<dbReference type="ProteomicsDB" id="293450"/>
<dbReference type="Pumba" id="Q9D8C6"/>
<dbReference type="Antibodypedia" id="58423">
    <property type="antibodies" value="29 antibodies from 15 providers"/>
</dbReference>
<dbReference type="DNASU" id="66172"/>
<dbReference type="Ensembl" id="ENSMUST00000019067.8">
    <property type="protein sequence ID" value="ENSMUSP00000019067.8"/>
    <property type="gene ID" value="ENSMUSG00000018923.14"/>
</dbReference>
<dbReference type="GeneID" id="66172"/>
<dbReference type="KEGG" id="mmu:66172"/>
<dbReference type="UCSC" id="uc007juv.1">
    <property type="organism name" value="mouse"/>
</dbReference>
<dbReference type="AGR" id="MGI:1913422"/>
<dbReference type="CTD" id="400569"/>
<dbReference type="MGI" id="MGI:1913422">
    <property type="gene designation" value="Med11"/>
</dbReference>
<dbReference type="VEuPathDB" id="HostDB:ENSMUSG00000018923"/>
<dbReference type="eggNOG" id="KOG4057">
    <property type="taxonomic scope" value="Eukaryota"/>
</dbReference>
<dbReference type="GeneTree" id="ENSGT00390000010184"/>
<dbReference type="HOGENOM" id="CLU_123010_2_0_1"/>
<dbReference type="InParanoid" id="Q9D8C6"/>
<dbReference type="OrthoDB" id="21396at9989"/>
<dbReference type="PhylomeDB" id="Q9D8C6"/>
<dbReference type="TreeFam" id="TF318328"/>
<dbReference type="BioGRID-ORCS" id="66172">
    <property type="hits" value="29 hits in 81 CRISPR screens"/>
</dbReference>
<dbReference type="ChiTaRS" id="Med11">
    <property type="organism name" value="mouse"/>
</dbReference>
<dbReference type="PRO" id="PR:Q9D8C6"/>
<dbReference type="Proteomes" id="UP000000589">
    <property type="component" value="Chromosome 11"/>
</dbReference>
<dbReference type="RNAct" id="Q9D8C6">
    <property type="molecule type" value="protein"/>
</dbReference>
<dbReference type="Bgee" id="ENSMUSG00000018923">
    <property type="expression patterns" value="Expressed in internal carotid artery and 251 other cell types or tissues"/>
</dbReference>
<dbReference type="ExpressionAtlas" id="Q9D8C6">
    <property type="expression patterns" value="baseline and differential"/>
</dbReference>
<dbReference type="GO" id="GO:0070847">
    <property type="term" value="C:core mediator complex"/>
    <property type="evidence" value="ECO:0000266"/>
    <property type="project" value="ComplexPortal"/>
</dbReference>
<dbReference type="GO" id="GO:0016592">
    <property type="term" value="C:mediator complex"/>
    <property type="evidence" value="ECO:0000266"/>
    <property type="project" value="MGI"/>
</dbReference>
<dbReference type="GO" id="GO:0005654">
    <property type="term" value="C:nucleoplasm"/>
    <property type="evidence" value="ECO:0000304"/>
    <property type="project" value="Reactome"/>
</dbReference>
<dbReference type="GO" id="GO:0005634">
    <property type="term" value="C:nucleus"/>
    <property type="evidence" value="ECO:0000266"/>
    <property type="project" value="ComplexPortal"/>
</dbReference>
<dbReference type="GO" id="GO:0000151">
    <property type="term" value="C:ubiquitin ligase complex"/>
    <property type="evidence" value="ECO:0007669"/>
    <property type="project" value="Ensembl"/>
</dbReference>
<dbReference type="GO" id="GO:0003712">
    <property type="term" value="F:transcription coregulator activity"/>
    <property type="evidence" value="ECO:0007669"/>
    <property type="project" value="InterPro"/>
</dbReference>
<dbReference type="GO" id="GO:0061630">
    <property type="term" value="F:ubiquitin protein ligase activity"/>
    <property type="evidence" value="ECO:0007669"/>
    <property type="project" value="Ensembl"/>
</dbReference>
<dbReference type="GO" id="GO:0032968">
    <property type="term" value="P:positive regulation of transcription elongation by RNA polymerase II"/>
    <property type="evidence" value="ECO:0000303"/>
    <property type="project" value="ComplexPortal"/>
</dbReference>
<dbReference type="GO" id="GO:0060261">
    <property type="term" value="P:positive regulation of transcription initiation by RNA polymerase II"/>
    <property type="evidence" value="ECO:0000303"/>
    <property type="project" value="ComplexPortal"/>
</dbReference>
<dbReference type="GO" id="GO:0016567">
    <property type="term" value="P:protein ubiquitination"/>
    <property type="evidence" value="ECO:0007669"/>
    <property type="project" value="Ensembl"/>
</dbReference>
<dbReference type="GO" id="GO:0051123">
    <property type="term" value="P:RNA polymerase II preinitiation complex assembly"/>
    <property type="evidence" value="ECO:0000303"/>
    <property type="project" value="ComplexPortal"/>
</dbReference>
<dbReference type="FunFam" id="1.10.287.3490:FF:000001">
    <property type="entry name" value="Mediator of RNA polymerase II transcription subunit 11"/>
    <property type="match status" value="1"/>
</dbReference>
<dbReference type="Gene3D" id="1.10.287.3490">
    <property type="match status" value="1"/>
</dbReference>
<dbReference type="InterPro" id="IPR019404">
    <property type="entry name" value="Mediator_Med11"/>
</dbReference>
<dbReference type="PANTHER" id="PTHR22890">
    <property type="entry name" value="MEDIATOR OF RNA POLYMERASE II TRANSCRIPTION SUBUNIT 11"/>
    <property type="match status" value="1"/>
</dbReference>
<dbReference type="Pfam" id="PF10280">
    <property type="entry name" value="Med11"/>
    <property type="match status" value="1"/>
</dbReference>
<reference key="1">
    <citation type="journal article" date="2005" name="Science">
        <title>The transcriptional landscape of the mammalian genome.</title>
        <authorList>
            <person name="Carninci P."/>
            <person name="Kasukawa T."/>
            <person name="Katayama S."/>
            <person name="Gough J."/>
            <person name="Frith M.C."/>
            <person name="Maeda N."/>
            <person name="Oyama R."/>
            <person name="Ravasi T."/>
            <person name="Lenhard B."/>
            <person name="Wells C."/>
            <person name="Kodzius R."/>
            <person name="Shimokawa K."/>
            <person name="Bajic V.B."/>
            <person name="Brenner S.E."/>
            <person name="Batalov S."/>
            <person name="Forrest A.R."/>
            <person name="Zavolan M."/>
            <person name="Davis M.J."/>
            <person name="Wilming L.G."/>
            <person name="Aidinis V."/>
            <person name="Allen J.E."/>
            <person name="Ambesi-Impiombato A."/>
            <person name="Apweiler R."/>
            <person name="Aturaliya R.N."/>
            <person name="Bailey T.L."/>
            <person name="Bansal M."/>
            <person name="Baxter L."/>
            <person name="Beisel K.W."/>
            <person name="Bersano T."/>
            <person name="Bono H."/>
            <person name="Chalk A.M."/>
            <person name="Chiu K.P."/>
            <person name="Choudhary V."/>
            <person name="Christoffels A."/>
            <person name="Clutterbuck D.R."/>
            <person name="Crowe M.L."/>
            <person name="Dalla E."/>
            <person name="Dalrymple B.P."/>
            <person name="de Bono B."/>
            <person name="Della Gatta G."/>
            <person name="di Bernardo D."/>
            <person name="Down T."/>
            <person name="Engstrom P."/>
            <person name="Fagiolini M."/>
            <person name="Faulkner G."/>
            <person name="Fletcher C.F."/>
            <person name="Fukushima T."/>
            <person name="Furuno M."/>
            <person name="Futaki S."/>
            <person name="Gariboldi M."/>
            <person name="Georgii-Hemming P."/>
            <person name="Gingeras T.R."/>
            <person name="Gojobori T."/>
            <person name="Green R.E."/>
            <person name="Gustincich S."/>
            <person name="Harbers M."/>
            <person name="Hayashi Y."/>
            <person name="Hensch T.K."/>
            <person name="Hirokawa N."/>
            <person name="Hill D."/>
            <person name="Huminiecki L."/>
            <person name="Iacono M."/>
            <person name="Ikeo K."/>
            <person name="Iwama A."/>
            <person name="Ishikawa T."/>
            <person name="Jakt M."/>
            <person name="Kanapin A."/>
            <person name="Katoh M."/>
            <person name="Kawasawa Y."/>
            <person name="Kelso J."/>
            <person name="Kitamura H."/>
            <person name="Kitano H."/>
            <person name="Kollias G."/>
            <person name="Krishnan S.P."/>
            <person name="Kruger A."/>
            <person name="Kummerfeld S.K."/>
            <person name="Kurochkin I.V."/>
            <person name="Lareau L.F."/>
            <person name="Lazarevic D."/>
            <person name="Lipovich L."/>
            <person name="Liu J."/>
            <person name="Liuni S."/>
            <person name="McWilliam S."/>
            <person name="Madan Babu M."/>
            <person name="Madera M."/>
            <person name="Marchionni L."/>
            <person name="Matsuda H."/>
            <person name="Matsuzawa S."/>
            <person name="Miki H."/>
            <person name="Mignone F."/>
            <person name="Miyake S."/>
            <person name="Morris K."/>
            <person name="Mottagui-Tabar S."/>
            <person name="Mulder N."/>
            <person name="Nakano N."/>
            <person name="Nakauchi H."/>
            <person name="Ng P."/>
            <person name="Nilsson R."/>
            <person name="Nishiguchi S."/>
            <person name="Nishikawa S."/>
            <person name="Nori F."/>
            <person name="Ohara O."/>
            <person name="Okazaki Y."/>
            <person name="Orlando V."/>
            <person name="Pang K.C."/>
            <person name="Pavan W.J."/>
            <person name="Pavesi G."/>
            <person name="Pesole G."/>
            <person name="Petrovsky N."/>
            <person name="Piazza S."/>
            <person name="Reed J."/>
            <person name="Reid J.F."/>
            <person name="Ring B.Z."/>
            <person name="Ringwald M."/>
            <person name="Rost B."/>
            <person name="Ruan Y."/>
            <person name="Salzberg S.L."/>
            <person name="Sandelin A."/>
            <person name="Schneider C."/>
            <person name="Schoenbach C."/>
            <person name="Sekiguchi K."/>
            <person name="Semple C.A."/>
            <person name="Seno S."/>
            <person name="Sessa L."/>
            <person name="Sheng Y."/>
            <person name="Shibata Y."/>
            <person name="Shimada H."/>
            <person name="Shimada K."/>
            <person name="Silva D."/>
            <person name="Sinclair B."/>
            <person name="Sperling S."/>
            <person name="Stupka E."/>
            <person name="Sugiura K."/>
            <person name="Sultana R."/>
            <person name="Takenaka Y."/>
            <person name="Taki K."/>
            <person name="Tammoja K."/>
            <person name="Tan S.L."/>
            <person name="Tang S."/>
            <person name="Taylor M.S."/>
            <person name="Tegner J."/>
            <person name="Teichmann S.A."/>
            <person name="Ueda H.R."/>
            <person name="van Nimwegen E."/>
            <person name="Verardo R."/>
            <person name="Wei C.L."/>
            <person name="Yagi K."/>
            <person name="Yamanishi H."/>
            <person name="Zabarovsky E."/>
            <person name="Zhu S."/>
            <person name="Zimmer A."/>
            <person name="Hide W."/>
            <person name="Bult C."/>
            <person name="Grimmond S.M."/>
            <person name="Teasdale R.D."/>
            <person name="Liu E.T."/>
            <person name="Brusic V."/>
            <person name="Quackenbush J."/>
            <person name="Wahlestedt C."/>
            <person name="Mattick J.S."/>
            <person name="Hume D.A."/>
            <person name="Kai C."/>
            <person name="Sasaki D."/>
            <person name="Tomaru Y."/>
            <person name="Fukuda S."/>
            <person name="Kanamori-Katayama M."/>
            <person name="Suzuki M."/>
            <person name="Aoki J."/>
            <person name="Arakawa T."/>
            <person name="Iida J."/>
            <person name="Imamura K."/>
            <person name="Itoh M."/>
            <person name="Kato T."/>
            <person name="Kawaji H."/>
            <person name="Kawagashira N."/>
            <person name="Kawashima T."/>
            <person name="Kojima M."/>
            <person name="Kondo S."/>
            <person name="Konno H."/>
            <person name="Nakano K."/>
            <person name="Ninomiya N."/>
            <person name="Nishio T."/>
            <person name="Okada M."/>
            <person name="Plessy C."/>
            <person name="Shibata K."/>
            <person name="Shiraki T."/>
            <person name="Suzuki S."/>
            <person name="Tagami M."/>
            <person name="Waki K."/>
            <person name="Watahiki A."/>
            <person name="Okamura-Oho Y."/>
            <person name="Suzuki H."/>
            <person name="Kawai J."/>
            <person name="Hayashizaki Y."/>
        </authorList>
    </citation>
    <scope>NUCLEOTIDE SEQUENCE [LARGE SCALE MRNA]</scope>
    <source>
        <strain>C57BL/6J</strain>
        <tissue>Embryo</tissue>
        <tissue>Small intestine</tissue>
    </source>
</reference>
<reference key="2">
    <citation type="journal article" date="2009" name="PLoS Biol.">
        <title>Lineage-specific biology revealed by a finished genome assembly of the mouse.</title>
        <authorList>
            <person name="Church D.M."/>
            <person name="Goodstadt L."/>
            <person name="Hillier L.W."/>
            <person name="Zody M.C."/>
            <person name="Goldstein S."/>
            <person name="She X."/>
            <person name="Bult C.J."/>
            <person name="Agarwala R."/>
            <person name="Cherry J.L."/>
            <person name="DiCuccio M."/>
            <person name="Hlavina W."/>
            <person name="Kapustin Y."/>
            <person name="Meric P."/>
            <person name="Maglott D."/>
            <person name="Birtle Z."/>
            <person name="Marques A.C."/>
            <person name="Graves T."/>
            <person name="Zhou S."/>
            <person name="Teague B."/>
            <person name="Potamousis K."/>
            <person name="Churas C."/>
            <person name="Place M."/>
            <person name="Herschleb J."/>
            <person name="Runnheim R."/>
            <person name="Forrest D."/>
            <person name="Amos-Landgraf J."/>
            <person name="Schwartz D.C."/>
            <person name="Cheng Z."/>
            <person name="Lindblad-Toh K."/>
            <person name="Eichler E.E."/>
            <person name="Ponting C.P."/>
        </authorList>
    </citation>
    <scope>NUCLEOTIDE SEQUENCE [LARGE SCALE GENOMIC DNA]</scope>
    <source>
        <strain>C57BL/6J</strain>
    </source>
</reference>
<reference key="3">
    <citation type="journal article" date="2004" name="Genome Res.">
        <title>The status, quality, and expansion of the NIH full-length cDNA project: the Mammalian Gene Collection (MGC).</title>
        <authorList>
            <consortium name="The MGC Project Team"/>
        </authorList>
    </citation>
    <scope>NUCLEOTIDE SEQUENCE [LARGE SCALE MRNA]</scope>
    <source>
        <strain>FVB/N</strain>
        <tissue>Kidney</tissue>
    </source>
</reference>
<reference key="4">
    <citation type="journal article" date="2010" name="Cell">
        <title>A tissue-specific atlas of mouse protein phosphorylation and expression.</title>
        <authorList>
            <person name="Huttlin E.L."/>
            <person name="Jedrychowski M.P."/>
            <person name="Elias J.E."/>
            <person name="Goswami T."/>
            <person name="Rad R."/>
            <person name="Beausoleil S.A."/>
            <person name="Villen J."/>
            <person name="Haas W."/>
            <person name="Sowa M.E."/>
            <person name="Gygi S.P."/>
        </authorList>
    </citation>
    <scope>IDENTIFICATION BY MASS SPECTROMETRY [LARGE SCALE ANALYSIS]</scope>
    <source>
        <tissue>Brain</tissue>
        <tissue>Kidney</tissue>
        <tissue>Testis</tissue>
    </source>
</reference>
<reference key="5">
    <citation type="journal article" date="2022" name="Genet. Med.">
        <title>A homozygous MED11 C-terminal variant causes a lethal neurodegenerative disease.</title>
        <authorList>
            <consortium name="SYNaPS Study Group"/>
            <person name="Cali E."/>
            <person name="Lin S.J."/>
            <person name="Rocca C."/>
            <person name="Sahin Y."/>
            <person name="Al Shamsi A."/>
            <person name="El Chehadeh S."/>
            <person name="Chaabouni M."/>
            <person name="Mankad K."/>
            <person name="Galanaki E."/>
            <person name="Efthymiou S."/>
            <person name="Sudhakar S."/>
            <person name="Athanasiou-Fragkouli A."/>
            <person name="Celik T."/>
            <person name="Narli N."/>
            <person name="Bianca S."/>
            <person name="Murphy D."/>
            <person name="De Carvalho Moreira F.M."/>
            <person name="Accogli A."/>
            <person name="Petree C."/>
            <person name="Huang K."/>
            <person name="Monastiri K."/>
            <person name="Edizadeh M."/>
            <person name="Nardello R."/>
            <person name="Ognibene M."/>
            <person name="De Marco P."/>
            <person name="Ruggieri M."/>
            <person name="Zara F."/>
            <person name="Striano P."/>
            <person name="Sahin Y."/>
            <person name="Al-Gazali L."/>
            <person name="Abi Warde M.T."/>
            <person name="Gerard B."/>
            <person name="Zifarelli G."/>
            <person name="Beetz C."/>
            <person name="Fortuna S."/>
            <person name="Soler M."/>
            <person name="Valente E.M."/>
            <person name="Varshney G."/>
            <person name="Maroofian R."/>
            <person name="Salpietro V."/>
            <person name="Houlden H."/>
        </authorList>
    </citation>
    <scope>TISSUE SPECIFICITY</scope>
</reference>
<gene>
    <name type="primary">Med11</name>
</gene>
<organism>
    <name type="scientific">Mus musculus</name>
    <name type="common">Mouse</name>
    <dbReference type="NCBI Taxonomy" id="10090"/>
    <lineage>
        <taxon>Eukaryota</taxon>
        <taxon>Metazoa</taxon>
        <taxon>Chordata</taxon>
        <taxon>Craniata</taxon>
        <taxon>Vertebrata</taxon>
        <taxon>Euteleostomi</taxon>
        <taxon>Mammalia</taxon>
        <taxon>Eutheria</taxon>
        <taxon>Euarchontoglires</taxon>
        <taxon>Glires</taxon>
        <taxon>Rodentia</taxon>
        <taxon>Myomorpha</taxon>
        <taxon>Muroidea</taxon>
        <taxon>Muridae</taxon>
        <taxon>Murinae</taxon>
        <taxon>Mus</taxon>
        <taxon>Mus</taxon>
    </lineage>
</organism>
<comment type="function">
    <text evidence="2">Component of the Mediator complex, a coactivator involved in the regulated transcription of nearly all RNA polymerase II-dependent genes. Mediator functions as a bridge to convey information from gene-specific regulatory proteins to the basal RNA polymerase II transcription machinery. Mediator is recruited to promoters by direct interactions with regulatory proteins and serves as a scaffold for the assembly of a functional pre-initiation complex with RNA polymerase II and the general transcription factors (By similarity).</text>
</comment>
<comment type="subunit">
    <text evidence="1">Component of the Mediator complex, which is composed of MED1, MED4, MED6, MED7, MED8, MED9, MED10, MED11, MED12, MED13, MED13L, MED14, MED15, MED16, MED17, MED18, MED19, MED20, MED21, MED22, MED23, MED24, MED25, MED26, MED27, MED29, MED30, MED31, CCNC, CDK8 and CDC2L6/CDK11. The MED12, MED13, CCNC and CDK8 subunits form a distinct module termed the CDK8 module. Mediator containing the CDK8 module is less active than Mediator lacking this module in supporting transcriptional activation. Individual preparations of the Mediator complex lacking one or more distinct subunits have been variously termed ARC, CRSP, DRIP, PC2, SMCC and TRAP (By similarity).</text>
</comment>
<comment type="interaction">
    <interactant intactId="EBI-6260909">
        <id>Q9D8C6</id>
    </interactant>
    <interactant intactId="EBI-394562">
        <id>Q9NVC6</id>
        <label>MED17</label>
    </interactant>
    <organismsDiffer>true</organismsDiffer>
    <experiments>2</experiments>
</comment>
<comment type="interaction">
    <interactant intactId="EBI-6260909">
        <id>Q9D8C6</id>
    </interactant>
    <interactant intactId="EBI-394687">
        <id>Q15528</id>
        <label>MED22</label>
    </interactant>
    <organismsDiffer>true</organismsDiffer>
    <experiments>2</experiments>
</comment>
<comment type="interaction">
    <interactant intactId="EBI-6260909">
        <id>Q9D8C6</id>
    </interactant>
    <interactant intactId="EBI-514199">
        <id>Q9H204</id>
        <label>MED28</label>
    </interactant>
    <organismsDiffer>true</organismsDiffer>
    <experiments>2</experiments>
</comment>
<comment type="interaction">
    <interactant intactId="EBI-6260909">
        <id>Q9D8C6</id>
    </interactant>
    <interactant intactId="EBI-394656">
        <id>Q9NX70</id>
        <label>MED29</label>
    </interactant>
    <organismsDiffer>true</organismsDiffer>
    <experiments>2</experiments>
</comment>
<comment type="subcellular location">
    <subcellularLocation>
        <location evidence="4">Nucleus</location>
    </subcellularLocation>
</comment>
<comment type="tissue specificity">
    <text evidence="3">Expressed in cochlea.</text>
</comment>
<comment type="similarity">
    <text evidence="4">Belongs to the Mediator complex subunit 11 family.</text>
</comment>
<keyword id="KW-0002">3D-structure</keyword>
<keyword id="KW-0007">Acetylation</keyword>
<keyword id="KW-0010">Activator</keyword>
<keyword id="KW-0539">Nucleus</keyword>
<keyword id="KW-1185">Reference proteome</keyword>
<keyword id="KW-0804">Transcription</keyword>
<keyword id="KW-0805">Transcription regulation</keyword>
<proteinExistence type="evidence at protein level"/>